<evidence type="ECO:0000255" key="1">
    <source>
        <dbReference type="HAMAP-Rule" id="MF_00023"/>
    </source>
</evidence>
<dbReference type="EMBL" id="CP001078">
    <property type="protein sequence ID" value="ACD52810.1"/>
    <property type="molecule type" value="Genomic_DNA"/>
</dbReference>
<dbReference type="RefSeq" id="WP_003373284.1">
    <property type="nucleotide sequence ID" value="NC_010723.1"/>
</dbReference>
<dbReference type="SMR" id="B2UY12"/>
<dbReference type="KEGG" id="cbt:CLH_2802"/>
<dbReference type="HOGENOM" id="CLU_108953_0_0_9"/>
<dbReference type="GO" id="GO:0005829">
    <property type="term" value="C:cytosol"/>
    <property type="evidence" value="ECO:0007669"/>
    <property type="project" value="TreeGrafter"/>
</dbReference>
<dbReference type="GO" id="GO:0003723">
    <property type="term" value="F:RNA binding"/>
    <property type="evidence" value="ECO:0007669"/>
    <property type="project" value="UniProtKB-UniRule"/>
</dbReference>
<dbReference type="GO" id="GO:0070929">
    <property type="term" value="P:trans-translation"/>
    <property type="evidence" value="ECO:0007669"/>
    <property type="project" value="UniProtKB-UniRule"/>
</dbReference>
<dbReference type="CDD" id="cd09294">
    <property type="entry name" value="SmpB"/>
    <property type="match status" value="1"/>
</dbReference>
<dbReference type="Gene3D" id="2.40.280.10">
    <property type="match status" value="1"/>
</dbReference>
<dbReference type="HAMAP" id="MF_00023">
    <property type="entry name" value="SmpB"/>
    <property type="match status" value="1"/>
</dbReference>
<dbReference type="InterPro" id="IPR023620">
    <property type="entry name" value="SmpB"/>
</dbReference>
<dbReference type="InterPro" id="IPR000037">
    <property type="entry name" value="SsrA-bd_prot"/>
</dbReference>
<dbReference type="InterPro" id="IPR020081">
    <property type="entry name" value="SsrA-bd_prot_CS"/>
</dbReference>
<dbReference type="NCBIfam" id="NF003843">
    <property type="entry name" value="PRK05422.1"/>
    <property type="match status" value="1"/>
</dbReference>
<dbReference type="NCBIfam" id="TIGR00086">
    <property type="entry name" value="smpB"/>
    <property type="match status" value="1"/>
</dbReference>
<dbReference type="PANTHER" id="PTHR30308:SF2">
    <property type="entry name" value="SSRA-BINDING PROTEIN"/>
    <property type="match status" value="1"/>
</dbReference>
<dbReference type="PANTHER" id="PTHR30308">
    <property type="entry name" value="TMRNA-BINDING COMPONENT OF TRANS-TRANSLATION TAGGING COMPLEX"/>
    <property type="match status" value="1"/>
</dbReference>
<dbReference type="Pfam" id="PF01668">
    <property type="entry name" value="SmpB"/>
    <property type="match status" value="1"/>
</dbReference>
<dbReference type="SUPFAM" id="SSF74982">
    <property type="entry name" value="Small protein B (SmpB)"/>
    <property type="match status" value="1"/>
</dbReference>
<dbReference type="PROSITE" id="PS01317">
    <property type="entry name" value="SSRP"/>
    <property type="match status" value="1"/>
</dbReference>
<organism>
    <name type="scientific">Clostridium botulinum (strain Alaska E43 / Type E3)</name>
    <dbReference type="NCBI Taxonomy" id="508767"/>
    <lineage>
        <taxon>Bacteria</taxon>
        <taxon>Bacillati</taxon>
        <taxon>Bacillota</taxon>
        <taxon>Clostridia</taxon>
        <taxon>Eubacteriales</taxon>
        <taxon>Clostridiaceae</taxon>
        <taxon>Clostridium</taxon>
    </lineage>
</organism>
<sequence length="156" mass="17958">MVRKKSSNTLAENRKARHEYFIEETIEAGIALVGTEVKSIRNGRANLKESYADIRNGEIFILSMHISPYEQGNIFNVEPLREKKLLLHKSEIHRLAGLVSRDGYTLIPLTLYLKAGKVKVALGICKGKKDYDKRDSMLEKAHNREMQRALKERSRY</sequence>
<accession>B2UY12</accession>
<comment type="function">
    <text evidence="1">Required for rescue of stalled ribosomes mediated by trans-translation. Binds to transfer-messenger RNA (tmRNA), required for stable association of tmRNA with ribosomes. tmRNA and SmpB together mimic tRNA shape, replacing the anticodon stem-loop with SmpB. tmRNA is encoded by the ssrA gene; the 2 termini fold to resemble tRNA(Ala) and it encodes a 'tag peptide', a short internal open reading frame. During trans-translation Ala-aminoacylated tmRNA acts like a tRNA, entering the A-site of stalled ribosomes, displacing the stalled mRNA. The ribosome then switches to translate the ORF on the tmRNA; the nascent peptide is terminated with the 'tag peptide' encoded by the tmRNA and targeted for degradation. The ribosome is freed to recommence translation, which seems to be the essential function of trans-translation.</text>
</comment>
<comment type="subcellular location">
    <subcellularLocation>
        <location evidence="1">Cytoplasm</location>
    </subcellularLocation>
    <text evidence="1">The tmRNA-SmpB complex associates with stalled 70S ribosomes.</text>
</comment>
<comment type="similarity">
    <text evidence="1">Belongs to the SmpB family.</text>
</comment>
<reference key="1">
    <citation type="submission" date="2008-05" db="EMBL/GenBank/DDBJ databases">
        <title>Complete genome sequence of Clostridium botulinum E3 str. Alaska E43.</title>
        <authorList>
            <person name="Brinkac L.M."/>
            <person name="Brown J.L."/>
            <person name="Bruce D."/>
            <person name="Detter C."/>
            <person name="Munk C."/>
            <person name="Smith L.A."/>
            <person name="Smith T.J."/>
            <person name="Sutton G."/>
            <person name="Brettin T.S."/>
        </authorList>
    </citation>
    <scope>NUCLEOTIDE SEQUENCE [LARGE SCALE GENOMIC DNA]</scope>
    <source>
        <strain>Alaska E43 / Type E3</strain>
    </source>
</reference>
<name>SSRP_CLOBA</name>
<proteinExistence type="inferred from homology"/>
<gene>
    <name evidence="1" type="primary">smpB</name>
    <name type="ordered locus">CLH_2802</name>
</gene>
<protein>
    <recommendedName>
        <fullName evidence="1">SsrA-binding protein</fullName>
    </recommendedName>
    <alternativeName>
        <fullName evidence="1">Small protein B</fullName>
    </alternativeName>
</protein>
<keyword id="KW-0963">Cytoplasm</keyword>
<keyword id="KW-0694">RNA-binding</keyword>
<feature type="chain" id="PRO_1000090139" description="SsrA-binding protein">
    <location>
        <begin position="1"/>
        <end position="156"/>
    </location>
</feature>